<evidence type="ECO:0000255" key="1">
    <source>
        <dbReference type="HAMAP-Rule" id="MF_00171"/>
    </source>
</evidence>
<dbReference type="EC" id="5.4.99.12" evidence="1"/>
<dbReference type="EMBL" id="CP000886">
    <property type="protein sequence ID" value="ABX66028.1"/>
    <property type="molecule type" value="Genomic_DNA"/>
</dbReference>
<dbReference type="RefSeq" id="WP_000016631.1">
    <property type="nucleotide sequence ID" value="NC_010102.1"/>
</dbReference>
<dbReference type="SMR" id="A9N476"/>
<dbReference type="KEGG" id="spq:SPAB_00602"/>
<dbReference type="PATRIC" id="fig|1016998.12.peg.563"/>
<dbReference type="HOGENOM" id="CLU_014673_0_2_6"/>
<dbReference type="BioCyc" id="SENT1016998:SPAB_RS02490-MONOMER"/>
<dbReference type="Proteomes" id="UP000008556">
    <property type="component" value="Chromosome"/>
</dbReference>
<dbReference type="GO" id="GO:0003723">
    <property type="term" value="F:RNA binding"/>
    <property type="evidence" value="ECO:0007669"/>
    <property type="project" value="InterPro"/>
</dbReference>
<dbReference type="GO" id="GO:0160147">
    <property type="term" value="F:tRNA pseudouridine(38-40) synthase activity"/>
    <property type="evidence" value="ECO:0007669"/>
    <property type="project" value="UniProtKB-EC"/>
</dbReference>
<dbReference type="GO" id="GO:0031119">
    <property type="term" value="P:tRNA pseudouridine synthesis"/>
    <property type="evidence" value="ECO:0007669"/>
    <property type="project" value="UniProtKB-UniRule"/>
</dbReference>
<dbReference type="CDD" id="cd02570">
    <property type="entry name" value="PseudoU_synth_EcTruA"/>
    <property type="match status" value="1"/>
</dbReference>
<dbReference type="FunFam" id="3.30.70.580:FF:000001">
    <property type="entry name" value="tRNA pseudouridine synthase A"/>
    <property type="match status" value="1"/>
</dbReference>
<dbReference type="FunFam" id="3.30.70.660:FF:000001">
    <property type="entry name" value="tRNA pseudouridine synthase A"/>
    <property type="match status" value="1"/>
</dbReference>
<dbReference type="Gene3D" id="3.30.70.660">
    <property type="entry name" value="Pseudouridine synthase I, catalytic domain, C-terminal subdomain"/>
    <property type="match status" value="1"/>
</dbReference>
<dbReference type="Gene3D" id="3.30.70.580">
    <property type="entry name" value="Pseudouridine synthase I, catalytic domain, N-terminal subdomain"/>
    <property type="match status" value="1"/>
</dbReference>
<dbReference type="HAMAP" id="MF_00171">
    <property type="entry name" value="TruA"/>
    <property type="match status" value="1"/>
</dbReference>
<dbReference type="InterPro" id="IPR020103">
    <property type="entry name" value="PsdUridine_synth_cat_dom_sf"/>
</dbReference>
<dbReference type="InterPro" id="IPR001406">
    <property type="entry name" value="PsdUridine_synth_TruA"/>
</dbReference>
<dbReference type="InterPro" id="IPR020097">
    <property type="entry name" value="PsdUridine_synth_TruA_a/b_dom"/>
</dbReference>
<dbReference type="InterPro" id="IPR020095">
    <property type="entry name" value="PsdUridine_synth_TruA_C"/>
</dbReference>
<dbReference type="InterPro" id="IPR020094">
    <property type="entry name" value="TruA/RsuA/RluB/E/F_N"/>
</dbReference>
<dbReference type="NCBIfam" id="TIGR00071">
    <property type="entry name" value="hisT_truA"/>
    <property type="match status" value="1"/>
</dbReference>
<dbReference type="PANTHER" id="PTHR11142">
    <property type="entry name" value="PSEUDOURIDYLATE SYNTHASE"/>
    <property type="match status" value="1"/>
</dbReference>
<dbReference type="PANTHER" id="PTHR11142:SF0">
    <property type="entry name" value="TRNA PSEUDOURIDINE SYNTHASE-LIKE 1"/>
    <property type="match status" value="1"/>
</dbReference>
<dbReference type="Pfam" id="PF01416">
    <property type="entry name" value="PseudoU_synth_1"/>
    <property type="match status" value="2"/>
</dbReference>
<dbReference type="PIRSF" id="PIRSF001430">
    <property type="entry name" value="tRNA_psdUrid_synth"/>
    <property type="match status" value="1"/>
</dbReference>
<dbReference type="SUPFAM" id="SSF55120">
    <property type="entry name" value="Pseudouridine synthase"/>
    <property type="match status" value="1"/>
</dbReference>
<sequence length="270" mass="30297">MSGQQSSPVYKIALGIEYDGSKYYGWQRQNEVRSVQEKLEKALSQVANEPINVFCAGRTDAGVHGTGQVVHFETTALRKDAAWTLGVNANLPGDIAVRWVKTVPDDFHARFSATARRYRYIIYNHRLRPAVLAKGVTHYYEPLDAERMHRAAQCLLGENDFTSFRAVQCQSRTPWRNVMHINVTRHGPYVVVDIKANAFVHHMVRNIVGSLLEVGAHNQPESWIAELLAARDRTLAAATAKAEGLYLVAVDYPDRFDLPKPPMGPLFLAD</sequence>
<organism>
    <name type="scientific">Salmonella paratyphi B (strain ATCC BAA-1250 / SPB7)</name>
    <dbReference type="NCBI Taxonomy" id="1016998"/>
    <lineage>
        <taxon>Bacteria</taxon>
        <taxon>Pseudomonadati</taxon>
        <taxon>Pseudomonadota</taxon>
        <taxon>Gammaproteobacteria</taxon>
        <taxon>Enterobacterales</taxon>
        <taxon>Enterobacteriaceae</taxon>
        <taxon>Salmonella</taxon>
    </lineage>
</organism>
<name>TRUA_SALPB</name>
<proteinExistence type="inferred from homology"/>
<protein>
    <recommendedName>
        <fullName evidence="1">tRNA pseudouridine synthase A</fullName>
        <ecNumber evidence="1">5.4.99.12</ecNumber>
    </recommendedName>
    <alternativeName>
        <fullName evidence="1">tRNA pseudouridine(38-40) synthase</fullName>
    </alternativeName>
    <alternativeName>
        <fullName evidence="1">tRNA pseudouridylate synthase I</fullName>
    </alternativeName>
    <alternativeName>
        <fullName evidence="1">tRNA-uridine isomerase I</fullName>
    </alternativeName>
</protein>
<keyword id="KW-0413">Isomerase</keyword>
<keyword id="KW-0819">tRNA processing</keyword>
<gene>
    <name evidence="1" type="primary">truA</name>
    <name type="ordered locus">SPAB_00602</name>
</gene>
<comment type="function">
    <text evidence="1">Formation of pseudouridine at positions 38, 39 and 40 in the anticodon stem and loop of transfer RNAs.</text>
</comment>
<comment type="catalytic activity">
    <reaction evidence="1">
        <text>uridine(38/39/40) in tRNA = pseudouridine(38/39/40) in tRNA</text>
        <dbReference type="Rhea" id="RHEA:22376"/>
        <dbReference type="Rhea" id="RHEA-COMP:10085"/>
        <dbReference type="Rhea" id="RHEA-COMP:10087"/>
        <dbReference type="ChEBI" id="CHEBI:65314"/>
        <dbReference type="ChEBI" id="CHEBI:65315"/>
        <dbReference type="EC" id="5.4.99.12"/>
    </reaction>
</comment>
<comment type="subunit">
    <text evidence="1">Homodimer.</text>
</comment>
<comment type="similarity">
    <text evidence="1">Belongs to the tRNA pseudouridine synthase TruA family.</text>
</comment>
<accession>A9N476</accession>
<feature type="chain" id="PRO_1000077100" description="tRNA pseudouridine synthase A">
    <location>
        <begin position="1"/>
        <end position="270"/>
    </location>
</feature>
<feature type="active site" description="Nucleophile" evidence="1">
    <location>
        <position position="60"/>
    </location>
</feature>
<feature type="binding site" evidence="1">
    <location>
        <position position="118"/>
    </location>
    <ligand>
        <name>substrate</name>
    </ligand>
</feature>
<reference key="1">
    <citation type="submission" date="2007-11" db="EMBL/GenBank/DDBJ databases">
        <authorList>
            <consortium name="The Salmonella enterica serovar Paratyphi B Genome Sequencing Project"/>
            <person name="McClelland M."/>
            <person name="Sanderson E.K."/>
            <person name="Porwollik S."/>
            <person name="Spieth J."/>
            <person name="Clifton W.S."/>
            <person name="Fulton R."/>
            <person name="Cordes M."/>
            <person name="Wollam A."/>
            <person name="Shah N."/>
            <person name="Pepin K."/>
            <person name="Bhonagiri V."/>
            <person name="Nash W."/>
            <person name="Johnson M."/>
            <person name="Thiruvilangam P."/>
            <person name="Wilson R."/>
        </authorList>
    </citation>
    <scope>NUCLEOTIDE SEQUENCE [LARGE SCALE GENOMIC DNA]</scope>
    <source>
        <strain>ATCC BAA-1250 / SPB7</strain>
    </source>
</reference>